<proteinExistence type="inferred from homology"/>
<comment type="function">
    <text evidence="1">Plays a central role in chromosome condensation, segregation and cell cycle progression. Functions as a homodimer, which is essential for chromosome partition. Involved in negative DNA supercoiling in vivo, and by this means organize and compact chromosomes. May achieve or facilitate chromosome segregation by condensation DNA from both sides of a centrally located replisome during cell division.</text>
</comment>
<comment type="subunit">
    <text evidence="1">Homodimerization via its hinge domain. Binds to DNA via its C-terminal region. Interacts, and probably forms a ternary complex, with MukE and MukF via its C-terminal region. The complex formation is stimulated by calcium or magnesium. Interacts with tubulin-related protein FtsZ.</text>
</comment>
<comment type="subcellular location">
    <subcellularLocation>
        <location evidence="1">Cytoplasm</location>
        <location evidence="1">Nucleoid</location>
    </subcellularLocation>
    <text evidence="1">Restricted to the nucleoid region.</text>
</comment>
<comment type="domain">
    <text evidence="1">The hinge domain, which separates the large intramolecular coiled coil regions, allows the homodimerization, forming a V-shaped homodimer.</text>
</comment>
<comment type="similarity">
    <text evidence="1">Belongs to the SMC family. MukB subfamily.</text>
</comment>
<accession>Q935S7</accession>
<evidence type="ECO:0000255" key="1">
    <source>
        <dbReference type="HAMAP-Rule" id="MF_01800"/>
    </source>
</evidence>
<evidence type="ECO:0000256" key="2">
    <source>
        <dbReference type="SAM" id="MobiDB-lite"/>
    </source>
</evidence>
<protein>
    <recommendedName>
        <fullName evidence="1">Chromosome partition protein MukB</fullName>
    </recommendedName>
    <alternativeName>
        <fullName evidence="1">Structural maintenance of chromosome-related protein</fullName>
    </alternativeName>
</protein>
<name>MUKB_SALTY</name>
<sequence length="1488" mass="170044">MIERGKFRSLTLINWNGFFARTFDLDELVTTLSGGNGAGKSTTMAAFVTALIPDLTLLHFRNTTEAGATSGSRDKGLHGKLKAGVCYSMLDTINSRHQRVVVGVRLQQVAGRDRKVDIKPFAIQGLPMSVQPTQLVTETLNERQARVLSLAELKDKLDEMEGVQFKQFNSITDYHSLMFDLGIIARRLRSASDRSKFYRLIEASLYGGISSAITRSLRDYLLPENSGVRKAFQDMEAALRENRLTLEAIRVTQSDRDLFKHLISEATDYVAADYMRHANERRVHLDQALAFRRDLYTSRKQLAAEQYKHVDMARELGEHNGAEGSLEADYQAASDHLNLVQTALRQQEKIERYEADLEELQIRLEEQNEVVAEAAEMQDENEARAEAAELEVDELKSQLADYQQALDVQQTRAIQYNQAISALARAKELCHLPDLTPESAAEWLDTFQAKEQEATEKLLSLEQKMSVAQTAHSQFEQAYQLVAAINGPLARSEAWDVARELLRDGVNQRHLAEQVQPLRMRLSELEQRLREQQEAERLLAEFCKRQGKNFDIDELEALHQELEARIASLSESVSSASEQRMALRQEQEQLQSRIQHLMQRAPVWLAAQNSLNQLSEQCGEEFTSSQEVTEYLQQLLEREREAIVERDEVGARKNAVDEEIERLSQPGGAEDQRLNALAERFGGVLLSEIYDDVSLEDAPYFSALYGPSRHAIVVPDLSQIAEQLEGLTDCPEDLYLIEGDPQSFDDSVFSVDELEKAVVVKIADRQWRYSRFPSLPIFGRAARENRIESLHAEREVLSERFATLSFDVQKTQRLHQAFSRFIGSHLSVAFEDDPEAEIRRLNGRRVELERALATHESDNQQQRLQFEQAKEGVSALNRLLPRLNLLADETLADRVDEIQERLDEAQEAARFVQQYGNQLAKLEPVVSVLQSDPEQFEQLKEDYAWSQQMQRDARQQAFALAEVVERRAHFSYSDSAEMLSGNSDLNEKLRQRLEQAEAERTRAREALRSHAAQLSQYSQVLASLKSSYDTKKELLNDLQRELQDIGVRADSGAEERARQRRDELHAQLSNNRSRRNQLEKALTFCEAEMENLTRKLRKLERDYHEMREQVVTAKAGWCAVMRMVKDNGVERRLHRRELAYLSADELRSMSDKALGALRLAVADNEHLRDVLRLSEDPKRPERKIQFFVAVYQHLRERIRQDIIRTDDPVEAIEQMEIELSRLTEELTSREQKLAISSRSVANIIRKTIQREQNRIRMLNQGLQSVSFGQVNSVRLNVNVRETHATLLDVLSEQQEQHQDLFNSNRLTFSEALAKLYQRLNPQIDMGQRTPQTIGEELLDYRNYLEMEVEVNRGSDGWLRAESGALSTGEAIGTGMSILVMVVQSWEDEARRLRGKDISPCRLLFLDEAARLDARSIATLFELCERLQMQLIIAAPENISPEKGTTYKLVRKVFQNTEHVHVVGLRGFAPQLPETLPGTQTEDTPSEAS</sequence>
<gene>
    <name evidence="1" type="primary">mukB</name>
    <name type="ordered locus">STM0994</name>
</gene>
<organism>
    <name type="scientific">Salmonella typhimurium (strain LT2 / SGSC1412 / ATCC 700720)</name>
    <dbReference type="NCBI Taxonomy" id="99287"/>
    <lineage>
        <taxon>Bacteria</taxon>
        <taxon>Pseudomonadati</taxon>
        <taxon>Pseudomonadota</taxon>
        <taxon>Gammaproteobacteria</taxon>
        <taxon>Enterobacterales</taxon>
        <taxon>Enterobacteriaceae</taxon>
        <taxon>Salmonella</taxon>
    </lineage>
</organism>
<feature type="chain" id="PRO_0000068227" description="Chromosome partition protein MukB">
    <location>
        <begin position="1"/>
        <end position="1488"/>
    </location>
</feature>
<feature type="region of interest" description="Flexible hinge" evidence="1">
    <location>
        <begin position="666"/>
        <end position="783"/>
    </location>
</feature>
<feature type="region of interest" description="Disordered" evidence="2">
    <location>
        <begin position="1049"/>
        <end position="1074"/>
    </location>
</feature>
<feature type="coiled-coil region" evidence="1">
    <location>
        <begin position="326"/>
        <end position="418"/>
    </location>
</feature>
<feature type="coiled-coil region" evidence="1">
    <location>
        <begin position="444"/>
        <end position="472"/>
    </location>
</feature>
<feature type="coiled-coil region" evidence="1">
    <location>
        <begin position="509"/>
        <end position="602"/>
    </location>
</feature>
<feature type="coiled-coil region" evidence="1">
    <location>
        <begin position="835"/>
        <end position="923"/>
    </location>
</feature>
<feature type="coiled-coil region" evidence="1">
    <location>
        <begin position="977"/>
        <end position="1116"/>
    </location>
</feature>
<feature type="coiled-coil region" evidence="1">
    <location>
        <begin position="1209"/>
        <end position="1265"/>
    </location>
</feature>
<feature type="compositionally biased region" description="Basic and acidic residues" evidence="2">
    <location>
        <begin position="1051"/>
        <end position="1065"/>
    </location>
</feature>
<feature type="binding site" evidence="1">
    <location>
        <begin position="34"/>
        <end position="41"/>
    </location>
    <ligand>
        <name>ATP</name>
        <dbReference type="ChEBI" id="CHEBI:30616"/>
    </ligand>
</feature>
<reference key="1">
    <citation type="journal article" date="2004" name="Mol. Biol. Evol.">
        <title>The evolution of SMC proteins: phylogenetic analysis and structural implications.</title>
        <authorList>
            <person name="Cobbe N."/>
            <person name="Heck M.M.S."/>
        </authorList>
    </citation>
    <scope>NUCLEOTIDE SEQUENCE [GENOMIC DNA]</scope>
</reference>
<reference key="2">
    <citation type="journal article" date="2001" name="Nature">
        <title>Complete genome sequence of Salmonella enterica serovar Typhimurium LT2.</title>
        <authorList>
            <person name="McClelland M."/>
            <person name="Sanderson K.E."/>
            <person name="Spieth J."/>
            <person name="Clifton S.W."/>
            <person name="Latreille P."/>
            <person name="Courtney L."/>
            <person name="Porwollik S."/>
            <person name="Ali J."/>
            <person name="Dante M."/>
            <person name="Du F."/>
            <person name="Hou S."/>
            <person name="Layman D."/>
            <person name="Leonard S."/>
            <person name="Nguyen C."/>
            <person name="Scott K."/>
            <person name="Holmes A."/>
            <person name="Grewal N."/>
            <person name="Mulvaney E."/>
            <person name="Ryan E."/>
            <person name="Sun H."/>
            <person name="Florea L."/>
            <person name="Miller W."/>
            <person name="Stoneking T."/>
            <person name="Nhan M."/>
            <person name="Waterston R."/>
            <person name="Wilson R.K."/>
        </authorList>
    </citation>
    <scope>NUCLEOTIDE SEQUENCE [LARGE SCALE GENOMIC DNA]</scope>
    <source>
        <strain>LT2 / SGSC1412 / ATCC 700720</strain>
    </source>
</reference>
<keyword id="KW-0067">ATP-binding</keyword>
<keyword id="KW-0131">Cell cycle</keyword>
<keyword id="KW-0132">Cell division</keyword>
<keyword id="KW-0159">Chromosome partition</keyword>
<keyword id="KW-0175">Coiled coil</keyword>
<keyword id="KW-0963">Cytoplasm</keyword>
<keyword id="KW-0226">DNA condensation</keyword>
<keyword id="KW-0238">DNA-binding</keyword>
<keyword id="KW-0547">Nucleotide-binding</keyword>
<keyword id="KW-1185">Reference proteome</keyword>
<dbReference type="EMBL" id="AJ417692">
    <property type="protein sequence ID" value="CAD10422.1"/>
    <property type="molecule type" value="Genomic_DNA"/>
</dbReference>
<dbReference type="EMBL" id="AE006468">
    <property type="protein sequence ID" value="AAL19928.1"/>
    <property type="molecule type" value="Genomic_DNA"/>
</dbReference>
<dbReference type="RefSeq" id="NP_459969.1">
    <property type="nucleotide sequence ID" value="NC_003197.2"/>
</dbReference>
<dbReference type="RefSeq" id="WP_000572724.1">
    <property type="nucleotide sequence ID" value="NC_003197.2"/>
</dbReference>
<dbReference type="SMR" id="Q935S7"/>
<dbReference type="STRING" id="99287.STM0994"/>
<dbReference type="PaxDb" id="99287-STM0994"/>
<dbReference type="GeneID" id="1252512"/>
<dbReference type="KEGG" id="stm:STM0994"/>
<dbReference type="PATRIC" id="fig|99287.12.peg.1047"/>
<dbReference type="HOGENOM" id="CLU_004430_0_0_6"/>
<dbReference type="OMA" id="FIAVYQH"/>
<dbReference type="PhylomeDB" id="Q935S7"/>
<dbReference type="BioCyc" id="SENT99287:STM0994-MONOMER"/>
<dbReference type="Proteomes" id="UP000001014">
    <property type="component" value="Chromosome"/>
</dbReference>
<dbReference type="GO" id="GO:0005737">
    <property type="term" value="C:cytoplasm"/>
    <property type="evidence" value="ECO:0000318"/>
    <property type="project" value="GO_Central"/>
</dbReference>
<dbReference type="GO" id="GO:0009295">
    <property type="term" value="C:nucleoid"/>
    <property type="evidence" value="ECO:0007669"/>
    <property type="project" value="UniProtKB-SubCell"/>
</dbReference>
<dbReference type="GO" id="GO:0005524">
    <property type="term" value="F:ATP binding"/>
    <property type="evidence" value="ECO:0007669"/>
    <property type="project" value="UniProtKB-UniRule"/>
</dbReference>
<dbReference type="GO" id="GO:0003677">
    <property type="term" value="F:DNA binding"/>
    <property type="evidence" value="ECO:0007669"/>
    <property type="project" value="UniProtKB-UniRule"/>
</dbReference>
<dbReference type="GO" id="GO:0051301">
    <property type="term" value="P:cell division"/>
    <property type="evidence" value="ECO:0007669"/>
    <property type="project" value="UniProtKB-KW"/>
</dbReference>
<dbReference type="GO" id="GO:0030261">
    <property type="term" value="P:chromosome condensation"/>
    <property type="evidence" value="ECO:0007669"/>
    <property type="project" value="UniProtKB-KW"/>
</dbReference>
<dbReference type="GO" id="GO:0007059">
    <property type="term" value="P:chromosome segregation"/>
    <property type="evidence" value="ECO:0007669"/>
    <property type="project" value="UniProtKB-UniRule"/>
</dbReference>
<dbReference type="GO" id="GO:0006260">
    <property type="term" value="P:DNA replication"/>
    <property type="evidence" value="ECO:0007669"/>
    <property type="project" value="UniProtKB-UniRule"/>
</dbReference>
<dbReference type="FunFam" id="3.30.70.3500:FF:000001">
    <property type="entry name" value="Chromosome partition protein MukB"/>
    <property type="match status" value="1"/>
</dbReference>
<dbReference type="FunFam" id="3.40.1140.10:FF:000001">
    <property type="entry name" value="Chromosome partition protein MukB"/>
    <property type="match status" value="1"/>
</dbReference>
<dbReference type="FunFam" id="3.40.1140.10:FF:000002">
    <property type="entry name" value="Chromosome partition protein MukB"/>
    <property type="match status" value="1"/>
</dbReference>
<dbReference type="Gene3D" id="1.10.287.1490">
    <property type="match status" value="1"/>
</dbReference>
<dbReference type="Gene3D" id="1.20.58.850">
    <property type="match status" value="1"/>
</dbReference>
<dbReference type="Gene3D" id="3.40.1140.10">
    <property type="match status" value="2"/>
</dbReference>
<dbReference type="Gene3D" id="1.20.5.420">
    <property type="entry name" value="Immunoglobulin FC, subunit C"/>
    <property type="match status" value="1"/>
</dbReference>
<dbReference type="Gene3D" id="3.30.70.3500">
    <property type="entry name" value="MukB, hinge domain"/>
    <property type="match status" value="1"/>
</dbReference>
<dbReference type="HAMAP" id="MF_01800">
    <property type="entry name" value="MukB"/>
    <property type="match status" value="1"/>
</dbReference>
<dbReference type="InterPro" id="IPR012090">
    <property type="entry name" value="MukB"/>
</dbReference>
<dbReference type="InterPro" id="IPR050308">
    <property type="entry name" value="MukB/SMC"/>
</dbReference>
<dbReference type="InterPro" id="IPR032520">
    <property type="entry name" value="MukB_hinge"/>
</dbReference>
<dbReference type="InterPro" id="IPR042501">
    <property type="entry name" value="MukB_hinge_sf"/>
</dbReference>
<dbReference type="InterPro" id="IPR007406">
    <property type="entry name" value="MukB_N_dom"/>
</dbReference>
<dbReference type="InterPro" id="IPR027417">
    <property type="entry name" value="P-loop_NTPase"/>
</dbReference>
<dbReference type="NCBIfam" id="NF003422">
    <property type="entry name" value="PRK04863.1"/>
    <property type="match status" value="1"/>
</dbReference>
<dbReference type="PANTHER" id="PTHR42963">
    <property type="entry name" value="CHROMOSOME PARTITION PROTEIN MUKB"/>
    <property type="match status" value="1"/>
</dbReference>
<dbReference type="PANTHER" id="PTHR42963:SF1">
    <property type="entry name" value="DUF4476 DOMAIN-CONTAINING PROTEIN"/>
    <property type="match status" value="1"/>
</dbReference>
<dbReference type="Pfam" id="PF04310">
    <property type="entry name" value="MukB"/>
    <property type="match status" value="1"/>
</dbReference>
<dbReference type="Pfam" id="PF16330">
    <property type="entry name" value="MukB_hinge"/>
    <property type="match status" value="1"/>
</dbReference>
<dbReference type="Pfam" id="PF13558">
    <property type="entry name" value="SbcC_Walker_B"/>
    <property type="match status" value="1"/>
</dbReference>
<dbReference type="PIRSF" id="PIRSF005246">
    <property type="entry name" value="MukB"/>
    <property type="match status" value="1"/>
</dbReference>
<dbReference type="SUPFAM" id="SSF52540">
    <property type="entry name" value="P-loop containing nucleoside triphosphate hydrolases"/>
    <property type="match status" value="2"/>
</dbReference>